<organism>
    <name type="scientific">Escherichia coli (strain K12)</name>
    <dbReference type="NCBI Taxonomy" id="83333"/>
    <lineage>
        <taxon>Bacteria</taxon>
        <taxon>Pseudomonadati</taxon>
        <taxon>Pseudomonadota</taxon>
        <taxon>Gammaproteobacteria</taxon>
        <taxon>Enterobacterales</taxon>
        <taxon>Enterobacteriaceae</taxon>
        <taxon>Escherichia</taxon>
    </lineage>
</organism>
<accession>P0AAJ5</accession>
<accession>P32175</accession>
<accession>Q2M8J0</accession>
<protein>
    <recommendedName>
        <fullName>Formate dehydrogenase-O iron-sulfur subunit</fullName>
    </recommendedName>
    <alternativeName>
        <fullName>Aerobic formate dehydrogenase iron-sulfur subunit</fullName>
    </alternativeName>
    <alternativeName>
        <fullName>FDH-Z subunit beta</fullName>
    </alternativeName>
    <alternativeName>
        <fullName>Formate dehydrogenase-O subunit beta</fullName>
    </alternativeName>
</protein>
<sequence>MAYQSQDIIRRSATNGLTPAPQARDFQEEVAKLIDVTTCIGCKACQVACSEWNDIRDTVGNNIGVYDNPNDLSAKSWTVMRFSEVEQNDKLEWLIRKDGCMHCSDPGCLKACPAEGAIIQYANGIVDFQSEQCIGCGYCIAGCPFDIPRLNPEDNRVYKCTLCVDRVVVGQEPACVKTCPTGAIHFGTKESMKTLASERVAELKTRGYDNAGLYDPAGVGGTHVMYVLHHADKPNLYHGLPENPEISETVKFWKGIWKPLAAVGFAATFAASIFHYVGVGPNRADEEENNLHEEKDEERK</sequence>
<proteinExistence type="evidence at protein level"/>
<feature type="chain" id="PRO_0000159249" description="Formate dehydrogenase-O iron-sulfur subunit">
    <location>
        <begin position="1"/>
        <end position="300"/>
    </location>
</feature>
<feature type="topological domain" description="Cytoplasmic" evidence="5">
    <location>
        <begin position="1"/>
        <end position="260"/>
    </location>
</feature>
<feature type="transmembrane region" description="Helical" evidence="4">
    <location>
        <begin position="261"/>
        <end position="279"/>
    </location>
</feature>
<feature type="topological domain" description="Periplasmic" evidence="5">
    <location>
        <begin position="280"/>
        <end position="300"/>
    </location>
</feature>
<feature type="domain" description="4Fe-4S ferredoxin-type 1" evidence="3">
    <location>
        <begin position="30"/>
        <end position="60"/>
    </location>
</feature>
<feature type="domain" description="4Fe-4S ferredoxin-type 2" evidence="3">
    <location>
        <begin position="91"/>
        <end position="123"/>
    </location>
</feature>
<feature type="domain" description="4Fe-4S ferredoxin-type 3" evidence="3">
    <location>
        <begin position="124"/>
        <end position="153"/>
    </location>
</feature>
<feature type="domain" description="4Fe-4S ferredoxin-type 4" evidence="3">
    <location>
        <begin position="158"/>
        <end position="189"/>
    </location>
</feature>
<feature type="binding site" evidence="2">
    <location>
        <position position="39"/>
    </location>
    <ligand>
        <name>[4Fe-4S] cluster</name>
        <dbReference type="ChEBI" id="CHEBI:49883"/>
        <label>1</label>
    </ligand>
</feature>
<feature type="binding site" evidence="2">
    <location>
        <position position="42"/>
    </location>
    <ligand>
        <name>[4Fe-4S] cluster</name>
        <dbReference type="ChEBI" id="CHEBI:49883"/>
        <label>1</label>
    </ligand>
</feature>
<feature type="binding site" evidence="2">
    <location>
        <position position="45"/>
    </location>
    <ligand>
        <name>[4Fe-4S] cluster</name>
        <dbReference type="ChEBI" id="CHEBI:49883"/>
        <label>1</label>
    </ligand>
</feature>
<feature type="binding site" evidence="2">
    <location>
        <position position="49"/>
    </location>
    <ligand>
        <name>[4Fe-4S] cluster</name>
        <dbReference type="ChEBI" id="CHEBI:49883"/>
        <label>2</label>
    </ligand>
</feature>
<feature type="binding site" evidence="2">
    <location>
        <position position="100"/>
    </location>
    <ligand>
        <name>[4Fe-4S] cluster</name>
        <dbReference type="ChEBI" id="CHEBI:49883"/>
        <label>3</label>
    </ligand>
</feature>
<feature type="binding site" evidence="2">
    <location>
        <position position="103"/>
    </location>
    <ligand>
        <name>[4Fe-4S] cluster</name>
        <dbReference type="ChEBI" id="CHEBI:49883"/>
        <label>3</label>
    </ligand>
</feature>
<feature type="binding site" evidence="2">
    <location>
        <position position="108"/>
    </location>
    <ligand>
        <name>[4Fe-4S] cluster</name>
        <dbReference type="ChEBI" id="CHEBI:49883"/>
        <label>3</label>
    </ligand>
</feature>
<feature type="binding site" evidence="2">
    <location>
        <position position="112"/>
    </location>
    <ligand>
        <name>[4Fe-4S] cluster</name>
        <dbReference type="ChEBI" id="CHEBI:49883"/>
        <label>4</label>
    </ligand>
</feature>
<feature type="binding site" evidence="2">
    <location>
        <position position="133"/>
    </location>
    <ligand>
        <name>[4Fe-4S] cluster</name>
        <dbReference type="ChEBI" id="CHEBI:49883"/>
        <label>4</label>
    </ligand>
</feature>
<feature type="binding site" evidence="2">
    <location>
        <position position="136"/>
    </location>
    <ligand>
        <name>[4Fe-4S] cluster</name>
        <dbReference type="ChEBI" id="CHEBI:49883"/>
        <label>4</label>
    </ligand>
</feature>
<feature type="binding site" evidence="2">
    <location>
        <position position="139"/>
    </location>
    <ligand>
        <name>[4Fe-4S] cluster</name>
        <dbReference type="ChEBI" id="CHEBI:49883"/>
        <label>4</label>
    </ligand>
</feature>
<feature type="binding site" evidence="2">
    <location>
        <position position="143"/>
    </location>
    <ligand>
        <name>[4Fe-4S] cluster</name>
        <dbReference type="ChEBI" id="CHEBI:49883"/>
        <label>3</label>
    </ligand>
</feature>
<feature type="binding site" evidence="2">
    <location>
        <position position="160"/>
    </location>
    <ligand>
        <name>[4Fe-4S] cluster</name>
        <dbReference type="ChEBI" id="CHEBI:49883"/>
        <label>2</label>
    </ligand>
</feature>
<feature type="binding site" evidence="2">
    <location>
        <position position="163"/>
    </location>
    <ligand>
        <name>[4Fe-4S] cluster</name>
        <dbReference type="ChEBI" id="CHEBI:49883"/>
        <label>2</label>
    </ligand>
</feature>
<feature type="binding site" evidence="2">
    <location>
        <position position="175"/>
    </location>
    <ligand>
        <name>[4Fe-4S] cluster</name>
        <dbReference type="ChEBI" id="CHEBI:49883"/>
        <label>2</label>
    </ligand>
</feature>
<feature type="binding site" evidence="2">
    <location>
        <position position="179"/>
    </location>
    <ligand>
        <name>[4Fe-4S] cluster</name>
        <dbReference type="ChEBI" id="CHEBI:49883"/>
        <label>1</label>
    </ligand>
</feature>
<comment type="function">
    <text evidence="1">Allows to use formate as major electron donor during aerobic respiration. The beta chain is an electron transfer unit containing 4 cysteine clusters involved in the formation of iron-sulfur centers. Electrons are transferred from the gamma chain to the molybdenum cofactor of the alpha subunit (By similarity).</text>
</comment>
<comment type="cofactor">
    <cofactor evidence="2">
        <name>[4Fe-4S] cluster</name>
        <dbReference type="ChEBI" id="CHEBI:49883"/>
    </cofactor>
    <text evidence="2">Binds 4 [4Fe-4S] clusters per subunit.</text>
</comment>
<comment type="subunit">
    <text>Formate dehydrogenase is a membrane-bound complex, formed by subunits alpha, beta and gamma.</text>
</comment>
<comment type="subcellular location">
    <subcellularLocation>
        <location>Cell membrane</location>
        <topology>Single-pass membrane protein</topology>
    </subcellularLocation>
</comment>
<dbReference type="EMBL" id="L19201">
    <property type="protein sequence ID" value="AAB03026.1"/>
    <property type="molecule type" value="Genomic_DNA"/>
</dbReference>
<dbReference type="EMBL" id="U00096">
    <property type="protein sequence ID" value="AAD13455.1"/>
    <property type="molecule type" value="Genomic_DNA"/>
</dbReference>
<dbReference type="EMBL" id="AP009048">
    <property type="protein sequence ID" value="BAE77416.1"/>
    <property type="molecule type" value="Genomic_DNA"/>
</dbReference>
<dbReference type="PIR" id="S40837">
    <property type="entry name" value="S40837"/>
</dbReference>
<dbReference type="RefSeq" id="NP_418329.1">
    <property type="nucleotide sequence ID" value="NC_000913.3"/>
</dbReference>
<dbReference type="RefSeq" id="WP_000331377.1">
    <property type="nucleotide sequence ID" value="NZ_SSZK01000026.1"/>
</dbReference>
<dbReference type="SMR" id="P0AAJ5"/>
<dbReference type="BioGRID" id="4263325">
    <property type="interactions" value="28"/>
</dbReference>
<dbReference type="ComplexPortal" id="CPX-6029">
    <property type="entry name" value="Formate dehydrogenase Z complex"/>
</dbReference>
<dbReference type="FunCoup" id="P0AAJ5">
    <property type="interactions" value="159"/>
</dbReference>
<dbReference type="IntAct" id="P0AAJ5">
    <property type="interactions" value="4"/>
</dbReference>
<dbReference type="STRING" id="511145.b3893"/>
<dbReference type="jPOST" id="P0AAJ5"/>
<dbReference type="PaxDb" id="511145-b3893"/>
<dbReference type="EnsemblBacteria" id="AAD13455">
    <property type="protein sequence ID" value="AAD13455"/>
    <property type="gene ID" value="b3893"/>
</dbReference>
<dbReference type="GeneID" id="93778045"/>
<dbReference type="GeneID" id="948395"/>
<dbReference type="KEGG" id="ecj:JW3864"/>
<dbReference type="KEGG" id="eco:b3893"/>
<dbReference type="KEGG" id="ecoc:C3026_21045"/>
<dbReference type="PATRIC" id="fig|1411691.4.peg.2816"/>
<dbReference type="EchoBASE" id="EB1803"/>
<dbReference type="eggNOG" id="COG0437">
    <property type="taxonomic scope" value="Bacteria"/>
</dbReference>
<dbReference type="HOGENOM" id="CLU_043374_0_3_6"/>
<dbReference type="InParanoid" id="P0AAJ5"/>
<dbReference type="OMA" id="KACQSAC"/>
<dbReference type="OrthoDB" id="9779457at2"/>
<dbReference type="PhylomeDB" id="P0AAJ5"/>
<dbReference type="BioCyc" id="EcoCyc:FDOH-MONOMER"/>
<dbReference type="BioCyc" id="MetaCyc:FDOH-MONOMER"/>
<dbReference type="PRO" id="PR:P0AAJ5"/>
<dbReference type="Proteomes" id="UP000000625">
    <property type="component" value="Chromosome"/>
</dbReference>
<dbReference type="GO" id="GO:0009326">
    <property type="term" value="C:formate dehydrogenase complex"/>
    <property type="evidence" value="ECO:0000314"/>
    <property type="project" value="EcoCyc"/>
</dbReference>
<dbReference type="GO" id="GO:0016020">
    <property type="term" value="C:membrane"/>
    <property type="evidence" value="ECO:0007005"/>
    <property type="project" value="UniProtKB"/>
</dbReference>
<dbReference type="GO" id="GO:0005886">
    <property type="term" value="C:plasma membrane"/>
    <property type="evidence" value="ECO:0007669"/>
    <property type="project" value="UniProtKB-SubCell"/>
</dbReference>
<dbReference type="GO" id="GO:0051539">
    <property type="term" value="F:4 iron, 4 sulfur cluster binding"/>
    <property type="evidence" value="ECO:0007669"/>
    <property type="project" value="UniProtKB-KW"/>
</dbReference>
<dbReference type="GO" id="GO:0036397">
    <property type="term" value="F:formate dehydrogenase (quinone) activity"/>
    <property type="evidence" value="ECO:0000314"/>
    <property type="project" value="EcoCyc"/>
</dbReference>
<dbReference type="GO" id="GO:0046872">
    <property type="term" value="F:metal ion binding"/>
    <property type="evidence" value="ECO:0007669"/>
    <property type="project" value="UniProtKB-KW"/>
</dbReference>
<dbReference type="GO" id="GO:0019645">
    <property type="term" value="P:anaerobic electron transport chain"/>
    <property type="evidence" value="ECO:0000303"/>
    <property type="project" value="ComplexPortal"/>
</dbReference>
<dbReference type="GO" id="GO:0009061">
    <property type="term" value="P:anaerobic respiration"/>
    <property type="evidence" value="ECO:0000269"/>
    <property type="project" value="EcoCyc"/>
</dbReference>
<dbReference type="GO" id="GO:0045333">
    <property type="term" value="P:cellular respiration"/>
    <property type="evidence" value="ECO:0000270"/>
    <property type="project" value="EcoCyc"/>
</dbReference>
<dbReference type="GO" id="GO:0015944">
    <property type="term" value="P:formate oxidation"/>
    <property type="evidence" value="ECO:0000314"/>
    <property type="project" value="EcoCyc"/>
</dbReference>
<dbReference type="GO" id="GO:0006788">
    <property type="term" value="P:heme oxidation"/>
    <property type="evidence" value="ECO:0000303"/>
    <property type="project" value="ComplexPortal"/>
</dbReference>
<dbReference type="GO" id="GO:0022904">
    <property type="term" value="P:respiratory electron transport chain"/>
    <property type="evidence" value="ECO:0000269"/>
    <property type="project" value="EcoCyc"/>
</dbReference>
<dbReference type="CDD" id="cd10558">
    <property type="entry name" value="FDH-N"/>
    <property type="match status" value="1"/>
</dbReference>
<dbReference type="FunFam" id="1.20.5.480:FF:000001">
    <property type="entry name" value="Formate dehydrogenase iron-sulfur subunit"/>
    <property type="match status" value="1"/>
</dbReference>
<dbReference type="Gene3D" id="3.30.70.20">
    <property type="match status" value="2"/>
</dbReference>
<dbReference type="Gene3D" id="1.20.5.480">
    <property type="entry name" value="Single helix bin"/>
    <property type="match status" value="1"/>
</dbReference>
<dbReference type="InterPro" id="IPR017896">
    <property type="entry name" value="4Fe4S_Fe-S-bd"/>
</dbReference>
<dbReference type="InterPro" id="IPR017900">
    <property type="entry name" value="4Fe4S_Fe_S_CS"/>
</dbReference>
<dbReference type="InterPro" id="IPR051555">
    <property type="entry name" value="FDH_Electron_Transfer_Unit"/>
</dbReference>
<dbReference type="InterPro" id="IPR006470">
    <property type="entry name" value="Formate_DH_bsu_Proteobacteria"/>
</dbReference>
<dbReference type="InterPro" id="IPR038384">
    <property type="entry name" value="Formate_DH_C_sf"/>
</dbReference>
<dbReference type="InterPro" id="IPR014603">
    <property type="entry name" value="Formate_DH_Fe-S_su"/>
</dbReference>
<dbReference type="InterPro" id="IPR015246">
    <property type="entry name" value="Formate_DH_TM"/>
</dbReference>
<dbReference type="NCBIfam" id="TIGR01582">
    <property type="entry name" value="FDH-beta"/>
    <property type="match status" value="1"/>
</dbReference>
<dbReference type="PANTHER" id="PTHR43545">
    <property type="entry name" value="FORMATE DEHYDROGENASE, NITRATE-INDUCIBLE, IRON-SULFUR SUBUNIT"/>
    <property type="match status" value="1"/>
</dbReference>
<dbReference type="PANTHER" id="PTHR43545:SF7">
    <property type="entry name" value="FORMATE DEHYDROGENASE-O IRON-SULFUR SUBUNIT"/>
    <property type="match status" value="1"/>
</dbReference>
<dbReference type="Pfam" id="PF13247">
    <property type="entry name" value="Fer4_11"/>
    <property type="match status" value="1"/>
</dbReference>
<dbReference type="Pfam" id="PF09163">
    <property type="entry name" value="Form-deh_trans"/>
    <property type="match status" value="1"/>
</dbReference>
<dbReference type="PIRSF" id="PIRSF036298">
    <property type="entry name" value="FDH_4Fe4S"/>
    <property type="match status" value="1"/>
</dbReference>
<dbReference type="SUPFAM" id="SSF54862">
    <property type="entry name" value="4Fe-4S ferredoxins"/>
    <property type="match status" value="1"/>
</dbReference>
<dbReference type="PROSITE" id="PS00198">
    <property type="entry name" value="4FE4S_FER_1"/>
    <property type="match status" value="1"/>
</dbReference>
<dbReference type="PROSITE" id="PS51379">
    <property type="entry name" value="4FE4S_FER_2"/>
    <property type="match status" value="4"/>
</dbReference>
<gene>
    <name type="primary">fdoH</name>
    <name type="ordered locus">b3893</name>
    <name type="ordered locus">JW3864</name>
</gene>
<evidence type="ECO:0000250" key="1"/>
<evidence type="ECO:0000250" key="2">
    <source>
        <dbReference type="UniProtKB" id="P0AAJ3"/>
    </source>
</evidence>
<evidence type="ECO:0000255" key="3">
    <source>
        <dbReference type="PROSITE-ProRule" id="PRU00711"/>
    </source>
</evidence>
<evidence type="ECO:0000305" key="4"/>
<evidence type="ECO:0000305" key="5">
    <source>
    </source>
</evidence>
<reference key="1">
    <citation type="journal article" date="1993" name="Nucleic Acids Res.">
        <title>Analysis of the Escherichia coli genome. III. DNA sequence of the region from 87.2 to 89.2 minutes.</title>
        <authorList>
            <person name="Plunkett G. III"/>
            <person name="Burland V."/>
            <person name="Daniels D.L."/>
            <person name="Blattner F.R."/>
        </authorList>
    </citation>
    <scope>NUCLEOTIDE SEQUENCE [LARGE SCALE GENOMIC DNA]</scope>
    <source>
        <strain>K12 / MG1655 / ATCC 47076</strain>
    </source>
</reference>
<reference key="2">
    <citation type="journal article" date="1997" name="Science">
        <title>The complete genome sequence of Escherichia coli K-12.</title>
        <authorList>
            <person name="Blattner F.R."/>
            <person name="Plunkett G. III"/>
            <person name="Bloch C.A."/>
            <person name="Perna N.T."/>
            <person name="Burland V."/>
            <person name="Riley M."/>
            <person name="Collado-Vides J."/>
            <person name="Glasner J.D."/>
            <person name="Rode C.K."/>
            <person name="Mayhew G.F."/>
            <person name="Gregor J."/>
            <person name="Davis N.W."/>
            <person name="Kirkpatrick H.A."/>
            <person name="Goeden M.A."/>
            <person name="Rose D.J."/>
            <person name="Mau B."/>
            <person name="Shao Y."/>
        </authorList>
    </citation>
    <scope>NUCLEOTIDE SEQUENCE [LARGE SCALE GENOMIC DNA]</scope>
    <source>
        <strain>K12 / MG1655 / ATCC 47076</strain>
    </source>
</reference>
<reference key="3">
    <citation type="journal article" date="2006" name="Mol. Syst. Biol.">
        <title>Highly accurate genome sequences of Escherichia coli K-12 strains MG1655 and W3110.</title>
        <authorList>
            <person name="Hayashi K."/>
            <person name="Morooka N."/>
            <person name="Yamamoto Y."/>
            <person name="Fujita K."/>
            <person name="Isono K."/>
            <person name="Choi S."/>
            <person name="Ohtsubo E."/>
            <person name="Baba T."/>
            <person name="Wanner B.L."/>
            <person name="Mori H."/>
            <person name="Horiuchi T."/>
        </authorList>
    </citation>
    <scope>NUCLEOTIDE SEQUENCE [LARGE SCALE GENOMIC DNA]</scope>
    <source>
        <strain>K12 / W3110 / ATCC 27325 / DSM 5911</strain>
    </source>
</reference>
<reference key="4">
    <citation type="journal article" date="1995" name="J. Bacteriol.">
        <title>Expression and characterization of the Escherichia coli fdo locus and a possible physiological role for aerobic formate dehydrogenase.</title>
        <authorList>
            <person name="Abaibou H."/>
            <person name="Pommier J."/>
            <person name="Giordano G."/>
            <person name="Mandrand-Berthelot M.-A."/>
        </authorList>
    </citation>
    <scope>CHARACTERIZATION</scope>
    <source>
        <strain>K12</strain>
    </source>
</reference>
<reference key="5">
    <citation type="journal article" date="1998" name="J. Bacteriol.">
        <title>Topological analysis of the aerobic membrane-bound formate dehydrogenase of Escherichia coli.</title>
        <authorList>
            <person name="Benoit S."/>
            <person name="Abaibou H."/>
            <person name="Mandrand-Berthelot M.-A."/>
        </authorList>
    </citation>
    <scope>TOPOLOGY</scope>
</reference>
<name>FDOH_ECOLI</name>
<keyword id="KW-0004">4Fe-4S</keyword>
<keyword id="KW-1003">Cell membrane</keyword>
<keyword id="KW-0249">Electron transport</keyword>
<keyword id="KW-0408">Iron</keyword>
<keyword id="KW-0411">Iron-sulfur</keyword>
<keyword id="KW-0472">Membrane</keyword>
<keyword id="KW-0479">Metal-binding</keyword>
<keyword id="KW-1185">Reference proteome</keyword>
<keyword id="KW-0677">Repeat</keyword>
<keyword id="KW-0812">Transmembrane</keyword>
<keyword id="KW-1133">Transmembrane helix</keyword>
<keyword id="KW-0813">Transport</keyword>